<evidence type="ECO:0000250" key="1">
    <source>
        <dbReference type="UniProtKB" id="P03521"/>
    </source>
</evidence>
<evidence type="ECO:0000269" key="2">
    <source>
    </source>
</evidence>
<evidence type="ECO:0000303" key="3">
    <source>
    </source>
</evidence>
<evidence type="ECO:0000305" key="4"/>
<dbReference type="EMBL" id="M16608">
    <property type="protein sequence ID" value="AAA48450.1"/>
    <property type="molecule type" value="Genomic_RNA"/>
</dbReference>
<dbReference type="EMBL" id="AY614724">
    <property type="protein sequence ID" value="AAU81940.1"/>
    <property type="molecule type" value="Genomic_RNA"/>
</dbReference>
<dbReference type="EMBL" id="AY614725">
    <property type="protein sequence ID" value="AAU81942.1"/>
    <property type="molecule type" value="Genomic_RNA"/>
</dbReference>
<dbReference type="EMBL" id="AY614726">
    <property type="protein sequence ID" value="AAU81944.1"/>
    <property type="molecule type" value="Genomic_RNA"/>
</dbReference>
<dbReference type="EMBL" id="AY614727">
    <property type="protein sequence ID" value="AAU81946.1"/>
    <property type="molecule type" value="Genomic_RNA"/>
</dbReference>
<dbReference type="EMBL" id="AY614728">
    <property type="protein sequence ID" value="AAU81948.1"/>
    <property type="molecule type" value="Genomic_RNA"/>
</dbReference>
<dbReference type="EMBL" id="AY614729">
    <property type="protein sequence ID" value="AAU81950.1"/>
    <property type="molecule type" value="Genomic_RNA"/>
</dbReference>
<dbReference type="EMBL" id="AY614730">
    <property type="protein sequence ID" value="AAU81952.1"/>
    <property type="molecule type" value="Genomic_RNA"/>
</dbReference>
<dbReference type="EMBL" id="AY614731">
    <property type="protein sequence ID" value="AAU81954.1"/>
    <property type="molecule type" value="Genomic_RNA"/>
</dbReference>
<dbReference type="PIR" id="A44502">
    <property type="entry name" value="A44502"/>
</dbReference>
<dbReference type="SMR" id="P11211"/>
<dbReference type="Proteomes" id="UP000008448">
    <property type="component" value="Genome"/>
</dbReference>
<dbReference type="GO" id="GO:0019029">
    <property type="term" value="C:helical viral capsid"/>
    <property type="evidence" value="ECO:0007669"/>
    <property type="project" value="UniProtKB-KW"/>
</dbReference>
<dbReference type="GO" id="GO:0030430">
    <property type="term" value="C:host cell cytoplasm"/>
    <property type="evidence" value="ECO:0007669"/>
    <property type="project" value="UniProtKB-SubCell"/>
</dbReference>
<dbReference type="GO" id="GO:1990904">
    <property type="term" value="C:ribonucleoprotein complex"/>
    <property type="evidence" value="ECO:0007669"/>
    <property type="project" value="UniProtKB-KW"/>
</dbReference>
<dbReference type="GO" id="GO:0019013">
    <property type="term" value="C:viral nucleocapsid"/>
    <property type="evidence" value="ECO:0007669"/>
    <property type="project" value="UniProtKB-KW"/>
</dbReference>
<dbReference type="GO" id="GO:0003723">
    <property type="term" value="F:RNA binding"/>
    <property type="evidence" value="ECO:0007669"/>
    <property type="project" value="UniProtKB-KW"/>
</dbReference>
<dbReference type="Gene3D" id="1.10.3610.10">
    <property type="entry name" value="Nucleoprotein"/>
    <property type="match status" value="1"/>
</dbReference>
<dbReference type="Gene3D" id="1.10.3570.10">
    <property type="entry name" value="Rhabdovirus nucleocapsid protein like domain"/>
    <property type="match status" value="1"/>
</dbReference>
<dbReference type="InterPro" id="IPR000448">
    <property type="entry name" value="Rhabdo_ncapsid"/>
</dbReference>
<dbReference type="InterPro" id="IPR023331">
    <property type="entry name" value="Rhabdovirus_ncapsid_C"/>
</dbReference>
<dbReference type="InterPro" id="IPR023330">
    <property type="entry name" value="Rhabdovirus_ncapsid_N"/>
</dbReference>
<dbReference type="InterPro" id="IPR035961">
    <property type="entry name" value="Rhabdovirus_nucleoprotein-like"/>
</dbReference>
<dbReference type="Pfam" id="PF00945">
    <property type="entry name" value="Rhabdo_ncap"/>
    <property type="match status" value="1"/>
</dbReference>
<dbReference type="SUPFAM" id="SSF140809">
    <property type="entry name" value="Rhabdovirus nucleoprotein-like"/>
    <property type="match status" value="1"/>
</dbReference>
<protein>
    <recommendedName>
        <fullName>Nucleoprotein</fullName>
        <shortName>NP</shortName>
    </recommendedName>
    <alternativeName>
        <fullName>Nucleocapsid protein</fullName>
        <shortName>Protein N</shortName>
    </alternativeName>
</protein>
<proteinExistence type="evidence at protein level"/>
<reference key="1">
    <citation type="journal article" date="1987" name="Virology">
        <title>Sequences of Chandipura virus N and NS genes: evidence for high mutability of the NS gene within vesiculoviruses.</title>
        <authorList>
            <person name="Masters P.S."/>
            <person name="Banerjee A.K."/>
        </authorList>
    </citation>
    <scope>NUCLEOTIDE SEQUENCE [GENOMIC RNA]</scope>
</reference>
<reference key="2">
    <citation type="journal article" date="2005" name="Emerg. Infect. Dis.">
        <title>G, N, and P gene-based analysis of Chandipura viruses, India.</title>
        <authorList>
            <person name="Arankalle V.A."/>
            <person name="Prabhakar S.S."/>
            <person name="Madhukar W.A."/>
            <person name="Hanumaih X."/>
            <person name="Dattatraya P.S."/>
            <person name="Akhilesh Chandra M."/>
        </authorList>
    </citation>
    <scope>NUCLEOTIDE SEQUENCE [GENOMIC RNA]</scope>
    <source>
        <strain>Isolate CIN0318R</strain>
        <strain>Isolate CIN0327M</strain>
        <strain>Isolate CIN0327R</strain>
        <strain>Isolate CIN0331M</strain>
        <strain>Isolate CIN0360R</strain>
        <strain>Isolate CIN0360V</strain>
        <strain>Isolate I653514</strain>
    </source>
</reference>
<reference key="3">
    <citation type="journal article" date="2012" name="PLoS ONE">
        <title>Interaction of chandipura virus N and P proteins: identification of two mutually exclusive domains of N involved in interaction with P.</title>
        <authorList>
            <person name="Mondal A."/>
            <person name="Roy A."/>
            <person name="Sarkar S."/>
            <person name="Mukherjee J."/>
            <person name="Ganguly T."/>
            <person name="Chattopadhyay D."/>
        </authorList>
    </citation>
    <scope>INTERACTION WITH THE PHOSPHOPROTEIN</scope>
    <scope>SUBUNIT</scope>
</reference>
<comment type="function">
    <text evidence="1">Encapsidates the genome in a ratio of one N per nine ribonucleotides, protecting it from nucleases. The encapsidated genomic RNA is termed the NC and serves as template for transcription and replication. The nucleocapsid is bullet-shaped with the tip containing 8 turns of a conical spiral before reaching the helical cylindrical trunk. Nucleocapsid assembly is concomitant with replication, therefore viral replication depends on the intracellular concentration of free N, termed N(0). All replicative products are resistant to nucleases.</text>
</comment>
<comment type="subunit">
    <text evidence="1 2">Homomultimerizes to form the nucleocapsid (PubMed:22485180). Binds to viral genomic RNA; this interaction contributes to the virion assembly (By similarity) (PubMed:22485180). N in the nucleocapsid interacts (via C-terminus) with the P protein (via C-terminus); this interaction allows to package the L polymerase in the virion and positions the polymerase on the template, since P acts as a bridge between N and L (PubMed:22485180). N(0) interacts with the P protein; this interaction prevents the uncontrolled aggregation of N(0) (PubMed:22485180). Interacts with the matrix protein (inner layer); this interaction contributes to the virion assembly (By similarity). Interacts with the L polymerase (By similarity).</text>
</comment>
<comment type="subcellular location">
    <subcellularLocation>
        <location evidence="1">Virion</location>
    </subcellularLocation>
    <subcellularLocation>
        <location evidence="1">Host cytoplasm</location>
    </subcellularLocation>
    <text evidence="1">The nucleocapsid is synthesized in the cytoplasm, and is subsequently transported via microtubules to the cell periphery. About 1240 copies of N are present in the virion.</text>
</comment>
<comment type="similarity">
    <text evidence="4">Belongs to the vesiculovirus nucleocapsid protein family.</text>
</comment>
<organism>
    <name type="scientific">Chandipura virus (strain I653514)</name>
    <name type="common">CHPV</name>
    <dbReference type="NCBI Taxonomy" id="11273"/>
    <lineage>
        <taxon>Viruses</taxon>
        <taxon>Riboviria</taxon>
        <taxon>Orthornavirae</taxon>
        <taxon>Negarnaviricota</taxon>
        <taxon>Haploviricotina</taxon>
        <taxon>Monjiviricetes</taxon>
        <taxon>Mononegavirales</taxon>
        <taxon>Rhabdoviridae</taxon>
        <taxon>Alpharhabdovirinae</taxon>
        <taxon>Vesiculovirus</taxon>
        <taxon>Vesiculovirus chandipura</taxon>
    </lineage>
</organism>
<keyword id="KW-0167">Capsid protein</keyword>
<keyword id="KW-1139">Helical capsid protein</keyword>
<keyword id="KW-1035">Host cytoplasm</keyword>
<keyword id="KW-1185">Reference proteome</keyword>
<keyword id="KW-0687">Ribonucleoprotein</keyword>
<keyword id="KW-0694">RNA-binding</keyword>
<keyword id="KW-0543">Viral nucleoprotein</keyword>
<keyword id="KW-0946">Virion</keyword>
<name>NCAP_CHAV</name>
<organismHost>
    <name type="scientific">Homo sapiens</name>
    <name type="common">Human</name>
    <dbReference type="NCBI Taxonomy" id="9606"/>
</organismHost>
<organismHost>
    <name type="scientific">Phlebotominae</name>
    <name type="common">sandflies</name>
    <dbReference type="NCBI Taxonomy" id="7198"/>
</organismHost>
<feature type="chain" id="PRO_0000222811" description="Nucleoprotein">
    <location>
        <begin position="1"/>
        <end position="422"/>
    </location>
</feature>
<feature type="region of interest" description="Interaction with the phosphoprotein (N0-P)" evidence="2">
    <location>
        <begin position="1"/>
        <end position="180"/>
    </location>
</feature>
<feature type="region of interest" description="Oligomerization" evidence="2">
    <location>
        <begin position="180"/>
        <end position="320"/>
    </location>
</feature>
<feature type="region of interest" description="Interaction with the phosphoprotein (N-RNA-P)" evidence="2">
    <location>
        <begin position="320"/>
        <end position="390"/>
    </location>
</feature>
<feature type="binding site" evidence="3">
    <location>
        <begin position="320"/>
        <end position="422"/>
    </location>
    <ligand>
        <name>RNA</name>
        <dbReference type="ChEBI" id="CHEBI:33697"/>
    </ligand>
</feature>
<feature type="sequence variant" description="In strain: Isolate CIN0309R, Isolate CIN0318R, Isolate CIN0327R, Isolate CIN0327M, Isolate CIN0331M, Isolate CIN0360R and Isolate CIN0360V.">
    <original>K</original>
    <variation>R</variation>
    <location>
        <position position="37"/>
    </location>
</feature>
<feature type="sequence variant" description="In strain: Isolate CIN0309R.">
    <original>A</original>
    <variation>T</variation>
    <location>
        <position position="163"/>
    </location>
</feature>
<feature type="sequence variant" description="In strain: Isolate CIN0309R, Isolate CIN0318R, Isolate CIN0327R and Isolate CIN0327M, Isolate CIN0360R and Isolate CIN0360V.">
    <original>E</original>
    <variation>D</variation>
    <location>
        <position position="364"/>
    </location>
</feature>
<feature type="sequence variant" description="In strain: Isolate CIN0360R and Isolate CIN0360V.">
    <original>V</original>
    <variation>I</variation>
    <location>
        <position position="413"/>
    </location>
</feature>
<sequence length="422" mass="47944">MSSQVFCISTGQTVSVCLPANEDPVEFPGAFFTPNAKKPTVYIKKETDLSLLRSHVYDGIKDGSVTVSQINSYLYMVLKDIREKPDKNWTSFGVELGKKNEPMGIFDLLNVEDVKGKELDKKGQDTRLPGDDLWLPTLIFGLYRVSRATQVEYKKTLMTNLYAQCKLRTKDAEEIVDETAEFFNAWANDSNFTKIVAAVDMYFHHFKKSDHAPIRFGTIVSRFKDCAALSTLSHLQKVTGLPIEEVFTWVFNKSVQDDLLRMMTPGQEIDQADSYMPYLIDMGLSTKSPYSSTKNPSFHFWGQLTAFLVKSARAKNALVPVDIAYHELTTAALLFAYAIGRSSELEQRFVLNGKKFTKEKDSREDNDTTPPSERNVVVWLAWWEDIKHEITPDMKAFAKRAVERVGDIRVNSVAEYARKLFA</sequence>
<accession>P11211</accession>
<accession>Q5IX72</accession>
<accession>Q5IX76</accession>
<accession>Q5IX78</accession>
<accession>Q5IX82</accession>
<accession>Q5IX86</accession>
<gene>
    <name type="primary">N</name>
</gene>